<name>FSCA_FUSEQ</name>
<organism>
    <name type="scientific">Fusarium equiseti</name>
    <name type="common">Fusarium scirpi</name>
    <dbReference type="NCBI Taxonomy" id="61235"/>
    <lineage>
        <taxon>Eukaryota</taxon>
        <taxon>Fungi</taxon>
        <taxon>Dikarya</taxon>
        <taxon>Ascomycota</taxon>
        <taxon>Pezizomycotina</taxon>
        <taxon>Sordariomycetes</taxon>
        <taxon>Hypocreomycetidae</taxon>
        <taxon>Hypocreales</taxon>
        <taxon>Nectriaceae</taxon>
        <taxon>Fusarium</taxon>
        <taxon>Fusarium incarnatum-equiseti species complex</taxon>
    </lineage>
</organism>
<comment type="function">
    <text evidence="3 6">NRPS-like oxidoreductasee; part of the fragmented gene cluster that mediates the biosynthesis of fusarochromene, a tryptophan-derived metabolite closely related to a group of mycotoxins including fusarochromanone (PubMed:33107888). Within the pathway, fscA acts as an oxidoreductase that reduces the carboxyl group of 4-hydroxykyrunenine to primary alcohol (Probable). The first step of the pathway is the epimerization of L-tryptophan to D-tryptophan in the presence of the NRPS-like tryptophan epimerase fscC. D-tryptophan is subsequently hydroxylated by the tryptophan 6-hydroxylase fscE to yield 6-hydroxytryptophan. The pyrrole ring undergoes cleavaged by the tryptophan 2,3-dioxygenase fscD and is finally converted to 4-hydroxykyrunenine by the hydrolase fscH. The NRPS-like oxidoreductase fscA reduces the carboxyl group to primary alcohol and the DMATS-type prenyltransferase fscG performs prenylation, followed by the formation of a chromene ring catalyzed by the oxidoreductase fscI, which leads to desacetylfusarochromene. Epoxidation by fscF and rearrangement reactions of chromene double bonds convert compound desacetylfusarochromene to fusarochromanones. Although specific acetyltransferases were not found near the fsc gene cluster, several predicted enzymes containing the N-acetyltransferase superfamily domain are present in the genome of F.equiseti. These predicted enzymes may have the potential to convert desacetylfusarochromene to fusarochromene (Probable).</text>
</comment>
<comment type="cofactor">
    <cofactor evidence="2">
        <name>pantetheine 4'-phosphate</name>
        <dbReference type="ChEBI" id="CHEBI:47942"/>
    </cofactor>
</comment>
<comment type="pathway">
    <text evidence="6">Secondary metabolite biosynthesis.</text>
</comment>
<comment type="domain">
    <text evidence="6">NRP synthetases are composed of discrete domains (adenylation (A), thiolation (T) or peptidyl carrier protein (PCP) and condensation (C) domains) which when grouped together are referred to as a single module. Each module is responsible for the recognition (via the A domain) and incorporation of a single amino acid into the growing peptide product. Thus, an NRP synthetase is generally composed of one or more modules and can terminate in a thioesterase domain (TE) that releases the newly synthesized peptide from the enzyme. FscA acts as an oxidoreductase and has the following unusual architecture: A-T-TE with a C-terminal TE domain that acts in the reductive release of the product.</text>
</comment>
<comment type="similarity">
    <text evidence="5">Belongs to the NRP synthetase family.</text>
</comment>
<reference key="1">
    <citation type="journal article" date="2021" name="Org. Biomol. Chem.">
        <title>Fusarochromene, a novel tryptophan-derived metabolite from Fusarium sacchari.</title>
        <authorList>
            <person name="Marshall J.W."/>
            <person name="de Mattos-Shipley K.M.J."/>
            <person name="Ghannam I.A.Y."/>
            <person name="Munawar A."/>
            <person name="Killen J.C."/>
            <person name="Lazarus C.M."/>
            <person name="Cox R.J."/>
            <person name="Willis C.L."/>
            <person name="Simpson T.J."/>
        </authorList>
    </citation>
    <scope>NUCLEOTIDE SEQUENCE [GENOMIC DNA]</scope>
    <scope>FUNCTION</scope>
    <scope>PATHWAY</scope>
</reference>
<accession>A0A823A1C6</accession>
<sequence length="1023" mass="112966">MSEIQVPESHWKHFLEWNRPLPPTKQTCIHHEIEAQAAAQPTKVAVASTVASLTYGDLNGMATRIASDLKRHGICPEKIVPLCFDKSPSMIVAMLAVLKAGGAFVALDPKAPSSRINVIMQQVNAKIVVTESKHRHLFSDYQIIEISTYDFMLPQTTDNYPSTRPSHPNDAAYLIFTSGSTGKPKAVVVEHQSFCSGMARHAPAQFIDRHSRVLQFASYTHDACIVEILTTLCMGGTICSPSEHERVNGLVQFINSQSVNWAVLTPSFITSIDHDEISTLETVVLAGERTLQSNISSWAGSVRLLTGYGVSECSVVTTISSPADENRSASHIGMPAGGVCWIVNPDDPDKLLPIGEVGEIIIEGPTVARGYLGNPEATERAFIQPPVWLHHVLEDPDHSSRLYRTGDLGRYNPDGSLDFVSRIGSQVKILGRRIELGEIEHHISNHPFVRQCMVQLPSMGDYHNQLVAVLELHTKPYVSLGDGSESNDLVQCNADTHKIESFLRTKVPEYMVPSFWFTIDHFPRLPSAKLDRNKVADLIAQLRLIGDASYGVVPEDDVIGRQIAREVTTMRLPQGQVLDPSISFQDTPLRKAGIDSIKAISLRKTLQRLWGVNIPVSCFMEQTARPTSIANHVRSAQDQGQGEYILPEPDLKGALDGLKRSLDVSMTTAPTRSSVSSGGKLSTLLTGGAGYLGQEILKTLLTAGRRVIVLVRACNISEGRKRFHNLPWWRSDFEDKLDVCLGDLSQPNLGIDQDLMERLGGHVQAVIHNGARVHWTECASDLWSVNVDATVTLLQFALSSSSVQRFVYISGGSAIGDSSDEWLVNARDGYSKTKLLAQALVEHCATKSEDLQLGLGMSIVKPGFIIGGPETGVANPSDYLWRYVASVVELGVYDESTTRARVPVSTLPLVAETIIRQISTASNRKHVEIIDESLRERDIWEVLRTLGYTLRPVSHRSWVTTIQDAMNKRREDHYLWPLASILEQQAYCLGDEKIQLGCKLKKKEYLKNAIQRNIQSLVSQGFI</sequence>
<protein>
    <recommendedName>
        <fullName evidence="4">NRPS-like oxidoreductase fscA</fullName>
        <ecNumber evidence="6">1.-.-.-</ecNumber>
        <ecNumber evidence="6">6.3.2.-</ecNumber>
    </recommendedName>
    <alternativeName>
        <fullName evidence="4">Fusarochromene biosynthesis cluster protein A</fullName>
    </alternativeName>
</protein>
<dbReference type="EC" id="1.-.-.-" evidence="6"/>
<dbReference type="EC" id="6.3.2.-" evidence="6"/>
<dbReference type="EMBL" id="BK013344">
    <property type="protein sequence ID" value="DAD54574.1"/>
    <property type="molecule type" value="Genomic_DNA"/>
</dbReference>
<dbReference type="SMR" id="A0A823A1C6"/>
<dbReference type="GO" id="GO:0016874">
    <property type="term" value="F:ligase activity"/>
    <property type="evidence" value="ECO:0007669"/>
    <property type="project" value="UniProtKB-KW"/>
</dbReference>
<dbReference type="GO" id="GO:0016491">
    <property type="term" value="F:oxidoreductase activity"/>
    <property type="evidence" value="ECO:0007669"/>
    <property type="project" value="UniProtKB-KW"/>
</dbReference>
<dbReference type="CDD" id="cd05918">
    <property type="entry name" value="A_NRPS_SidN3_like"/>
    <property type="match status" value="1"/>
</dbReference>
<dbReference type="FunFam" id="3.40.50.980:FF:000001">
    <property type="entry name" value="Non-ribosomal peptide synthetase"/>
    <property type="match status" value="1"/>
</dbReference>
<dbReference type="FunFam" id="3.40.50.12780:FF:000014">
    <property type="entry name" value="Nonribosomal peptide synthetase 1"/>
    <property type="match status" value="1"/>
</dbReference>
<dbReference type="Gene3D" id="3.30.300.30">
    <property type="match status" value="1"/>
</dbReference>
<dbReference type="Gene3D" id="1.10.1200.10">
    <property type="entry name" value="ACP-like"/>
    <property type="match status" value="1"/>
</dbReference>
<dbReference type="Gene3D" id="3.40.50.12780">
    <property type="entry name" value="N-terminal domain of ligase-like"/>
    <property type="match status" value="1"/>
</dbReference>
<dbReference type="Gene3D" id="3.40.50.720">
    <property type="entry name" value="NAD(P)-binding Rossmann-like Domain"/>
    <property type="match status" value="1"/>
</dbReference>
<dbReference type="InterPro" id="IPR010071">
    <property type="entry name" value="AA_adenyl_dom"/>
</dbReference>
<dbReference type="InterPro" id="IPR036736">
    <property type="entry name" value="ACP-like_sf"/>
</dbReference>
<dbReference type="InterPro" id="IPR045851">
    <property type="entry name" value="AMP-bd_C_sf"/>
</dbReference>
<dbReference type="InterPro" id="IPR020845">
    <property type="entry name" value="AMP-binding_CS"/>
</dbReference>
<dbReference type="InterPro" id="IPR000873">
    <property type="entry name" value="AMP-dep_synth/lig_dom"/>
</dbReference>
<dbReference type="InterPro" id="IPR042099">
    <property type="entry name" value="ANL_N_sf"/>
</dbReference>
<dbReference type="InterPro" id="IPR013120">
    <property type="entry name" value="Far_NAD-bd"/>
</dbReference>
<dbReference type="InterPro" id="IPR036291">
    <property type="entry name" value="NAD(P)-bd_dom_sf"/>
</dbReference>
<dbReference type="InterPro" id="IPR009081">
    <property type="entry name" value="PP-bd_ACP"/>
</dbReference>
<dbReference type="NCBIfam" id="TIGR01733">
    <property type="entry name" value="AA-adenyl-dom"/>
    <property type="match status" value="1"/>
</dbReference>
<dbReference type="PANTHER" id="PTHR44845">
    <property type="entry name" value="CARRIER DOMAIN-CONTAINING PROTEIN"/>
    <property type="match status" value="1"/>
</dbReference>
<dbReference type="PANTHER" id="PTHR44845:SF4">
    <property type="entry name" value="NONRIBOSOMAL PEPTIDE SYNTHASE INPA"/>
    <property type="match status" value="1"/>
</dbReference>
<dbReference type="Pfam" id="PF00501">
    <property type="entry name" value="AMP-binding"/>
    <property type="match status" value="1"/>
</dbReference>
<dbReference type="Pfam" id="PF07993">
    <property type="entry name" value="NAD_binding_4"/>
    <property type="match status" value="1"/>
</dbReference>
<dbReference type="SUPFAM" id="SSF56801">
    <property type="entry name" value="Acetyl-CoA synthetase-like"/>
    <property type="match status" value="1"/>
</dbReference>
<dbReference type="SUPFAM" id="SSF47336">
    <property type="entry name" value="ACP-like"/>
    <property type="match status" value="1"/>
</dbReference>
<dbReference type="SUPFAM" id="SSF51735">
    <property type="entry name" value="NAD(P)-binding Rossmann-fold domains"/>
    <property type="match status" value="1"/>
</dbReference>
<dbReference type="PROSITE" id="PS00455">
    <property type="entry name" value="AMP_BINDING"/>
    <property type="match status" value="1"/>
</dbReference>
<dbReference type="PROSITE" id="PS50075">
    <property type="entry name" value="CARRIER"/>
    <property type="match status" value="1"/>
</dbReference>
<gene>
    <name evidence="4" type="primary">fscA</name>
</gene>
<proteinExistence type="inferred from homology"/>
<evidence type="ECO:0000255" key="1"/>
<evidence type="ECO:0000255" key="2">
    <source>
        <dbReference type="PROSITE-ProRule" id="PRU00258"/>
    </source>
</evidence>
<evidence type="ECO:0000269" key="3">
    <source>
    </source>
</evidence>
<evidence type="ECO:0000303" key="4">
    <source>
    </source>
</evidence>
<evidence type="ECO:0000305" key="5"/>
<evidence type="ECO:0000305" key="6">
    <source>
    </source>
</evidence>
<keyword id="KW-0436">Ligase</keyword>
<keyword id="KW-0560">Oxidoreductase</keyword>
<keyword id="KW-0596">Phosphopantetheine</keyword>
<keyword id="KW-0597">Phosphoprotein</keyword>
<feature type="chain" id="PRO_0000461409" description="NRPS-like oxidoreductase fscA">
    <location>
        <begin position="1"/>
        <end position="1023"/>
    </location>
</feature>
<feature type="domain" description="Carrier" evidence="2">
    <location>
        <begin position="554"/>
        <end position="637"/>
    </location>
</feature>
<feature type="domain" description="Thioester reductase (TE)" evidence="1">
    <location>
        <begin position="685"/>
        <end position="901"/>
    </location>
</feature>
<feature type="region of interest" description="Adenylation" evidence="1 6">
    <location>
        <begin position="54"/>
        <end position="454"/>
    </location>
</feature>
<feature type="modified residue" description="O-(pantetheine 4'-phosphoryl)serine" evidence="2">
    <location>
        <position position="596"/>
    </location>
</feature>